<organism>
    <name type="scientific">Proteus mirabilis (strain HI4320)</name>
    <dbReference type="NCBI Taxonomy" id="529507"/>
    <lineage>
        <taxon>Bacteria</taxon>
        <taxon>Pseudomonadati</taxon>
        <taxon>Pseudomonadota</taxon>
        <taxon>Gammaproteobacteria</taxon>
        <taxon>Enterobacterales</taxon>
        <taxon>Morganellaceae</taxon>
        <taxon>Proteus</taxon>
    </lineage>
</organism>
<proteinExistence type="inferred from homology"/>
<name>PLSX_PROMH</name>
<keyword id="KW-0963">Cytoplasm</keyword>
<keyword id="KW-0444">Lipid biosynthesis</keyword>
<keyword id="KW-0443">Lipid metabolism</keyword>
<keyword id="KW-0594">Phospholipid biosynthesis</keyword>
<keyword id="KW-1208">Phospholipid metabolism</keyword>
<keyword id="KW-1185">Reference proteome</keyword>
<keyword id="KW-0808">Transferase</keyword>
<dbReference type="EC" id="2.3.1.274" evidence="1"/>
<dbReference type="EMBL" id="AM942759">
    <property type="protein sequence ID" value="CAR41950.1"/>
    <property type="molecule type" value="Genomic_DNA"/>
</dbReference>
<dbReference type="RefSeq" id="WP_012367762.1">
    <property type="nucleotide sequence ID" value="NC_010554.1"/>
</dbReference>
<dbReference type="SMR" id="B4ETC6"/>
<dbReference type="EnsemblBacteria" id="CAR41950">
    <property type="protein sequence ID" value="CAR41950"/>
    <property type="gene ID" value="PMI0858"/>
</dbReference>
<dbReference type="GeneID" id="6803295"/>
<dbReference type="KEGG" id="pmr:PMI0858"/>
<dbReference type="eggNOG" id="COG0416">
    <property type="taxonomic scope" value="Bacteria"/>
</dbReference>
<dbReference type="HOGENOM" id="CLU_039379_1_0_6"/>
<dbReference type="UniPathway" id="UPA00085"/>
<dbReference type="Proteomes" id="UP000008319">
    <property type="component" value="Chromosome"/>
</dbReference>
<dbReference type="GO" id="GO:0005737">
    <property type="term" value="C:cytoplasm"/>
    <property type="evidence" value="ECO:0007669"/>
    <property type="project" value="UniProtKB-SubCell"/>
</dbReference>
<dbReference type="GO" id="GO:0043811">
    <property type="term" value="F:phosphate:acyl-[acyl carrier protein] acyltransferase activity"/>
    <property type="evidence" value="ECO:0007669"/>
    <property type="project" value="UniProtKB-UniRule"/>
</dbReference>
<dbReference type="GO" id="GO:0006633">
    <property type="term" value="P:fatty acid biosynthetic process"/>
    <property type="evidence" value="ECO:0007669"/>
    <property type="project" value="UniProtKB-UniRule"/>
</dbReference>
<dbReference type="GO" id="GO:0008654">
    <property type="term" value="P:phospholipid biosynthetic process"/>
    <property type="evidence" value="ECO:0007669"/>
    <property type="project" value="UniProtKB-KW"/>
</dbReference>
<dbReference type="FunFam" id="3.40.718.10:FF:000008">
    <property type="entry name" value="Phosphate acyltransferase"/>
    <property type="match status" value="1"/>
</dbReference>
<dbReference type="Gene3D" id="3.40.718.10">
    <property type="entry name" value="Isopropylmalate Dehydrogenase"/>
    <property type="match status" value="1"/>
</dbReference>
<dbReference type="HAMAP" id="MF_00019">
    <property type="entry name" value="PlsX"/>
    <property type="match status" value="1"/>
</dbReference>
<dbReference type="InterPro" id="IPR003664">
    <property type="entry name" value="FA_synthesis"/>
</dbReference>
<dbReference type="InterPro" id="IPR012281">
    <property type="entry name" value="Phospholipid_synth_PlsX-like"/>
</dbReference>
<dbReference type="NCBIfam" id="TIGR00182">
    <property type="entry name" value="plsX"/>
    <property type="match status" value="1"/>
</dbReference>
<dbReference type="PANTHER" id="PTHR30100">
    <property type="entry name" value="FATTY ACID/PHOSPHOLIPID SYNTHESIS PROTEIN PLSX"/>
    <property type="match status" value="1"/>
</dbReference>
<dbReference type="PANTHER" id="PTHR30100:SF1">
    <property type="entry name" value="PHOSPHATE ACYLTRANSFERASE"/>
    <property type="match status" value="1"/>
</dbReference>
<dbReference type="Pfam" id="PF02504">
    <property type="entry name" value="FA_synthesis"/>
    <property type="match status" value="1"/>
</dbReference>
<dbReference type="PIRSF" id="PIRSF002465">
    <property type="entry name" value="Phsphlp_syn_PlsX"/>
    <property type="match status" value="1"/>
</dbReference>
<dbReference type="SUPFAM" id="SSF53659">
    <property type="entry name" value="Isocitrate/Isopropylmalate dehydrogenase-like"/>
    <property type="match status" value="1"/>
</dbReference>
<protein>
    <recommendedName>
        <fullName evidence="1">Phosphate acyltransferase</fullName>
        <ecNumber evidence="1">2.3.1.274</ecNumber>
    </recommendedName>
    <alternativeName>
        <fullName evidence="1">Acyl-ACP phosphotransacylase</fullName>
    </alternativeName>
    <alternativeName>
        <fullName evidence="1">Acyl-[acyl-carrier-protein]--phosphate acyltransferase</fullName>
    </alternativeName>
    <alternativeName>
        <fullName evidence="1">Phosphate-acyl-ACP acyltransferase</fullName>
    </alternativeName>
</protein>
<accession>B4ETC6</accession>
<sequence length="345" mass="36931">MTNLTIALDAMGGDFGPRITVPACLRALASNPHLKILLVGQPDSISPLLANQNAELISRLHVIPAEHIVANDAKPSHAIRASKGTSMRVALDLVKTGEAQACVSAGNTGVLMGLAKLRLKAIDGIERPALVSVLPNQKKSKTVVLDLGANVNCDSQMLVQFAVMGAVMAEEIAGIHSPKVALLNIGEEESKGLDNIREAATVLKATPNINYIGYVEGNELLTGKTDVLVCDGFAGNVSLKTMEGVIRVFLSLIKSSTGDNKKTSWWMKLLKKWLQKRLNKRFGHMNPDQYNGASLLGLRGIVIKSHGGANENAFTAAIEQAVQAIERQIPERIASRLNTVLPKSD</sequence>
<comment type="function">
    <text evidence="1">Catalyzes the reversible formation of acyl-phosphate (acyl-PO(4)) from acyl-[acyl-carrier-protein] (acyl-ACP). This enzyme utilizes acyl-ACP as fatty acyl donor, but not acyl-CoA.</text>
</comment>
<comment type="catalytic activity">
    <reaction evidence="1">
        <text>a fatty acyl-[ACP] + phosphate = an acyl phosphate + holo-[ACP]</text>
        <dbReference type="Rhea" id="RHEA:42292"/>
        <dbReference type="Rhea" id="RHEA-COMP:9685"/>
        <dbReference type="Rhea" id="RHEA-COMP:14125"/>
        <dbReference type="ChEBI" id="CHEBI:43474"/>
        <dbReference type="ChEBI" id="CHEBI:59918"/>
        <dbReference type="ChEBI" id="CHEBI:64479"/>
        <dbReference type="ChEBI" id="CHEBI:138651"/>
        <dbReference type="EC" id="2.3.1.274"/>
    </reaction>
</comment>
<comment type="pathway">
    <text evidence="1">Lipid metabolism; phospholipid metabolism.</text>
</comment>
<comment type="subunit">
    <text evidence="1">Homodimer. Probably interacts with PlsY.</text>
</comment>
<comment type="subcellular location">
    <subcellularLocation>
        <location evidence="1">Cytoplasm</location>
    </subcellularLocation>
    <text evidence="1">Associated with the membrane possibly through PlsY.</text>
</comment>
<comment type="similarity">
    <text evidence="1">Belongs to the PlsX family.</text>
</comment>
<reference key="1">
    <citation type="journal article" date="2008" name="J. Bacteriol.">
        <title>Complete genome sequence of uropathogenic Proteus mirabilis, a master of both adherence and motility.</title>
        <authorList>
            <person name="Pearson M.M."/>
            <person name="Sebaihia M."/>
            <person name="Churcher C."/>
            <person name="Quail M.A."/>
            <person name="Seshasayee A.S."/>
            <person name="Luscombe N.M."/>
            <person name="Abdellah Z."/>
            <person name="Arrosmith C."/>
            <person name="Atkin B."/>
            <person name="Chillingworth T."/>
            <person name="Hauser H."/>
            <person name="Jagels K."/>
            <person name="Moule S."/>
            <person name="Mungall K."/>
            <person name="Norbertczak H."/>
            <person name="Rabbinowitsch E."/>
            <person name="Walker D."/>
            <person name="Whithead S."/>
            <person name="Thomson N.R."/>
            <person name="Rather P.N."/>
            <person name="Parkhill J."/>
            <person name="Mobley H.L.T."/>
        </authorList>
    </citation>
    <scope>NUCLEOTIDE SEQUENCE [LARGE SCALE GENOMIC DNA]</scope>
    <source>
        <strain>HI4320</strain>
    </source>
</reference>
<feature type="chain" id="PRO_1000089928" description="Phosphate acyltransferase">
    <location>
        <begin position="1"/>
        <end position="345"/>
    </location>
</feature>
<evidence type="ECO:0000255" key="1">
    <source>
        <dbReference type="HAMAP-Rule" id="MF_00019"/>
    </source>
</evidence>
<gene>
    <name evidence="1" type="primary">plsX</name>
    <name type="ordered locus">PMI0858</name>
</gene>